<evidence type="ECO:0000250" key="1"/>
<evidence type="ECO:0000256" key="2">
    <source>
        <dbReference type="SAM" id="MobiDB-lite"/>
    </source>
</evidence>
<evidence type="ECO:0000303" key="3">
    <source>
    </source>
</evidence>
<evidence type="ECO:0000305" key="4"/>
<sequence>MNHNSNLVLPSHQTETQTQDETDISVWRFRGSDNAAKASSVTMRVIVYKLFDECSLDVKKPLLPLAHGDPSVYPCYRTSILVENAVVDVLRSGKGNSYGPAAGILPARQAVADYVNRDLTNKVKPNDVFITVGCNQGIEVVLQSLARPNANILLPRPSYPHYEARAVYSGLEVRKFDLLPEKEWEIDLPGIEAMADENTVAMVIINPNNPCGNVYSYDHLKKVAETAKKLGIMVITDEVYCQTIFGDKPFVPMGEFSSITPVITLGGISKGWIVPGWRIGWIALNDPRGILKSTGMVQSIQQNLDITPDATTIVQAALPEILGKANKELFAKKNSMLKQNVELVCDRLKEIPCLVCNKKPESCTYLLTKLKLPLLEDIEDDMDFCMKLAKEENLVLLPGVALGLKNWIRITIGVEAQMLEDALERLNGFCKRHLKKTESSFQALSNGKI</sequence>
<proteinExistence type="evidence at transcript level"/>
<gene>
    <name type="ordered locus">At4g28420</name>
    <name type="ORF">F20O9.100</name>
</gene>
<name>TAT1_ARATH</name>
<accession>Q67Y55</accession>
<accession>O49451</accession>
<comment type="cofactor">
    <cofactor evidence="1">
        <name>pyridoxal 5'-phosphate</name>
        <dbReference type="ChEBI" id="CHEBI:597326"/>
    </cofactor>
</comment>
<comment type="alternative products">
    <event type="alternative splicing"/>
    <isoform>
        <id>Q67Y55-1</id>
        <name>1</name>
        <sequence type="displayed"/>
    </isoform>
    <isoform>
        <id>Q67Y55-2</id>
        <name>2</name>
        <sequence type="described" ref="VSP_041762 VSP_041763"/>
    </isoform>
</comment>
<comment type="similarity">
    <text evidence="4">Belongs to the class-I pyridoxal-phosphate-dependent aminotransferase family.</text>
</comment>
<dbReference type="EC" id="2.6.1.-"/>
<dbReference type="EMBL" id="AL021749">
    <property type="protein sequence ID" value="CAA16881.1"/>
    <property type="molecule type" value="Genomic_DNA"/>
</dbReference>
<dbReference type="EMBL" id="AL161572">
    <property type="protein sequence ID" value="CAB79644.1"/>
    <property type="molecule type" value="Genomic_DNA"/>
</dbReference>
<dbReference type="EMBL" id="CP002687">
    <property type="protein sequence ID" value="AEE85484.1"/>
    <property type="molecule type" value="Genomic_DNA"/>
</dbReference>
<dbReference type="EMBL" id="CP002687">
    <property type="protein sequence ID" value="AEE85485.1"/>
    <property type="molecule type" value="Genomic_DNA"/>
</dbReference>
<dbReference type="EMBL" id="AY142527">
    <property type="protein sequence ID" value="AAN13070.1"/>
    <property type="molecule type" value="mRNA"/>
</dbReference>
<dbReference type="EMBL" id="AK176613">
    <property type="protein sequence ID" value="BAD44376.1"/>
    <property type="molecule type" value="mRNA"/>
</dbReference>
<dbReference type="PIR" id="T04612">
    <property type="entry name" value="T04612"/>
</dbReference>
<dbReference type="RefSeq" id="NP_001031739.1">
    <molecule id="Q67Y55-1"/>
    <property type="nucleotide sequence ID" value="NM_001036662.2"/>
</dbReference>
<dbReference type="RefSeq" id="NP_194571.1">
    <molecule id="Q67Y55-2"/>
    <property type="nucleotide sequence ID" value="NM_118984.3"/>
</dbReference>
<dbReference type="SMR" id="Q67Y55"/>
<dbReference type="FunCoup" id="Q67Y55">
    <property type="interactions" value="335"/>
</dbReference>
<dbReference type="STRING" id="3702.Q67Y55"/>
<dbReference type="PaxDb" id="3702-AT4G28420.2"/>
<dbReference type="ProteomicsDB" id="234189">
    <molecule id="Q67Y55-1"/>
</dbReference>
<dbReference type="EnsemblPlants" id="AT4G28420.1">
    <molecule id="Q67Y55-2"/>
    <property type="protein sequence ID" value="AT4G28420.1"/>
    <property type="gene ID" value="AT4G28420"/>
</dbReference>
<dbReference type="EnsemblPlants" id="AT4G28420.2">
    <molecule id="Q67Y55-1"/>
    <property type="protein sequence ID" value="AT4G28420.2"/>
    <property type="gene ID" value="AT4G28420"/>
</dbReference>
<dbReference type="GeneID" id="828959"/>
<dbReference type="Gramene" id="AT4G28420.1">
    <molecule id="Q67Y55-2"/>
    <property type="protein sequence ID" value="AT4G28420.1"/>
    <property type="gene ID" value="AT4G28420"/>
</dbReference>
<dbReference type="Gramene" id="AT4G28420.2">
    <molecule id="Q67Y55-1"/>
    <property type="protein sequence ID" value="AT4G28420.2"/>
    <property type="gene ID" value="AT4G28420"/>
</dbReference>
<dbReference type="KEGG" id="ath:AT4G28420"/>
<dbReference type="Araport" id="AT4G28420"/>
<dbReference type="TAIR" id="AT4G28420"/>
<dbReference type="eggNOG" id="KOG0259">
    <property type="taxonomic scope" value="Eukaryota"/>
</dbReference>
<dbReference type="HOGENOM" id="CLU_017584_4_2_1"/>
<dbReference type="InParanoid" id="Q67Y55"/>
<dbReference type="OMA" id="QTQYESD"/>
<dbReference type="OrthoDB" id="7042322at2759"/>
<dbReference type="PhylomeDB" id="Q67Y55"/>
<dbReference type="BioCyc" id="ARA:AT4G28420-MONOMER"/>
<dbReference type="BRENDA" id="2.6.1.5">
    <property type="organism ID" value="399"/>
</dbReference>
<dbReference type="PRO" id="PR:Q67Y55"/>
<dbReference type="Proteomes" id="UP000006548">
    <property type="component" value="Chromosome 4"/>
</dbReference>
<dbReference type="ExpressionAtlas" id="Q67Y55">
    <property type="expression patterns" value="baseline and differential"/>
</dbReference>
<dbReference type="GO" id="GO:0030170">
    <property type="term" value="F:pyridoxal phosphate binding"/>
    <property type="evidence" value="ECO:0007669"/>
    <property type="project" value="InterPro"/>
</dbReference>
<dbReference type="GO" id="GO:0008483">
    <property type="term" value="F:transaminase activity"/>
    <property type="evidence" value="ECO:0007669"/>
    <property type="project" value="UniProtKB-KW"/>
</dbReference>
<dbReference type="GO" id="GO:0006520">
    <property type="term" value="P:amino acid metabolic process"/>
    <property type="evidence" value="ECO:0007669"/>
    <property type="project" value="InterPro"/>
</dbReference>
<dbReference type="GO" id="GO:0009058">
    <property type="term" value="P:biosynthetic process"/>
    <property type="evidence" value="ECO:0007669"/>
    <property type="project" value="InterPro"/>
</dbReference>
<dbReference type="CDD" id="cd00609">
    <property type="entry name" value="AAT_like"/>
    <property type="match status" value="1"/>
</dbReference>
<dbReference type="FunFam" id="3.40.640.10:FF:000048">
    <property type="entry name" value="tyrosine aminotransferase"/>
    <property type="match status" value="1"/>
</dbReference>
<dbReference type="Gene3D" id="3.90.1150.10">
    <property type="entry name" value="Aspartate Aminotransferase, domain 1"/>
    <property type="match status" value="1"/>
</dbReference>
<dbReference type="Gene3D" id="3.40.640.10">
    <property type="entry name" value="Type I PLP-dependent aspartate aminotransferase-like (Major domain)"/>
    <property type="match status" value="1"/>
</dbReference>
<dbReference type="InterPro" id="IPR004839">
    <property type="entry name" value="Aminotransferase_I/II_large"/>
</dbReference>
<dbReference type="InterPro" id="IPR015424">
    <property type="entry name" value="PyrdxlP-dep_Trfase"/>
</dbReference>
<dbReference type="InterPro" id="IPR015421">
    <property type="entry name" value="PyrdxlP-dep_Trfase_major"/>
</dbReference>
<dbReference type="InterPro" id="IPR015422">
    <property type="entry name" value="PyrdxlP-dep_Trfase_small"/>
</dbReference>
<dbReference type="InterPro" id="IPR005958">
    <property type="entry name" value="TyrNic_aminoTrfase"/>
</dbReference>
<dbReference type="NCBIfam" id="TIGR01265">
    <property type="entry name" value="tyr_nico_aTase"/>
    <property type="match status" value="1"/>
</dbReference>
<dbReference type="PANTHER" id="PTHR45744:SF16">
    <property type="entry name" value="AMINOTRANSFERASE TAT1-RELATED"/>
    <property type="match status" value="1"/>
</dbReference>
<dbReference type="PANTHER" id="PTHR45744">
    <property type="entry name" value="TYROSINE AMINOTRANSFERASE"/>
    <property type="match status" value="1"/>
</dbReference>
<dbReference type="Pfam" id="PF00155">
    <property type="entry name" value="Aminotran_1_2"/>
    <property type="match status" value="1"/>
</dbReference>
<dbReference type="PIRSF" id="PIRSF000517">
    <property type="entry name" value="Tyr_transaminase"/>
    <property type="match status" value="1"/>
</dbReference>
<dbReference type="SUPFAM" id="SSF53383">
    <property type="entry name" value="PLP-dependent transferases"/>
    <property type="match status" value="1"/>
</dbReference>
<feature type="chain" id="PRO_0000412725" description="Probable aminotransferase TAT1">
    <location>
        <begin position="1"/>
        <end position="449"/>
    </location>
</feature>
<feature type="region of interest" description="Disordered" evidence="2">
    <location>
        <begin position="1"/>
        <end position="20"/>
    </location>
</feature>
<feature type="compositionally biased region" description="Polar residues" evidence="2">
    <location>
        <begin position="1"/>
        <end position="12"/>
    </location>
</feature>
<feature type="splice variant" id="VSP_041762" description="In isoform 2." evidence="3">
    <original>TKLKLPLLEDIEDDMDFCMKLA</original>
    <variation>VPPPTSLILFHDSRSIWMILIS</variation>
    <location>
        <begin position="368"/>
        <end position="389"/>
    </location>
</feature>
<feature type="splice variant" id="VSP_041763" description="In isoform 2." evidence="3">
    <location>
        <begin position="390"/>
        <end position="449"/>
    </location>
</feature>
<keyword id="KW-0025">Alternative splicing</keyword>
<keyword id="KW-0032">Aminotransferase</keyword>
<keyword id="KW-0663">Pyridoxal phosphate</keyword>
<keyword id="KW-1185">Reference proteome</keyword>
<keyword id="KW-0808">Transferase</keyword>
<organism>
    <name type="scientific">Arabidopsis thaliana</name>
    <name type="common">Mouse-ear cress</name>
    <dbReference type="NCBI Taxonomy" id="3702"/>
    <lineage>
        <taxon>Eukaryota</taxon>
        <taxon>Viridiplantae</taxon>
        <taxon>Streptophyta</taxon>
        <taxon>Embryophyta</taxon>
        <taxon>Tracheophyta</taxon>
        <taxon>Spermatophyta</taxon>
        <taxon>Magnoliopsida</taxon>
        <taxon>eudicotyledons</taxon>
        <taxon>Gunneridae</taxon>
        <taxon>Pentapetalae</taxon>
        <taxon>rosids</taxon>
        <taxon>malvids</taxon>
        <taxon>Brassicales</taxon>
        <taxon>Brassicaceae</taxon>
        <taxon>Camelineae</taxon>
        <taxon>Arabidopsis</taxon>
    </lineage>
</organism>
<protein>
    <recommendedName>
        <fullName>Probable aminotransferase TAT1</fullName>
        <ecNumber>2.6.1.-</ecNumber>
    </recommendedName>
    <alternativeName>
        <fullName>Tyrosine aminotransferase 1</fullName>
    </alternativeName>
</protein>
<reference key="1">
    <citation type="journal article" date="1999" name="Nature">
        <title>Sequence and analysis of chromosome 4 of the plant Arabidopsis thaliana.</title>
        <authorList>
            <person name="Mayer K.F.X."/>
            <person name="Schueller C."/>
            <person name="Wambutt R."/>
            <person name="Murphy G."/>
            <person name="Volckaert G."/>
            <person name="Pohl T."/>
            <person name="Duesterhoeft A."/>
            <person name="Stiekema W."/>
            <person name="Entian K.-D."/>
            <person name="Terryn N."/>
            <person name="Harris B."/>
            <person name="Ansorge W."/>
            <person name="Brandt P."/>
            <person name="Grivell L.A."/>
            <person name="Rieger M."/>
            <person name="Weichselgartner M."/>
            <person name="de Simone V."/>
            <person name="Obermaier B."/>
            <person name="Mache R."/>
            <person name="Mueller M."/>
            <person name="Kreis M."/>
            <person name="Delseny M."/>
            <person name="Puigdomenech P."/>
            <person name="Watson M."/>
            <person name="Schmidtheini T."/>
            <person name="Reichert B."/>
            <person name="Portetelle D."/>
            <person name="Perez-Alonso M."/>
            <person name="Boutry M."/>
            <person name="Bancroft I."/>
            <person name="Vos P."/>
            <person name="Hoheisel J."/>
            <person name="Zimmermann W."/>
            <person name="Wedler H."/>
            <person name="Ridley P."/>
            <person name="Langham S.-A."/>
            <person name="McCullagh B."/>
            <person name="Bilham L."/>
            <person name="Robben J."/>
            <person name="van der Schueren J."/>
            <person name="Grymonprez B."/>
            <person name="Chuang Y.-J."/>
            <person name="Vandenbussche F."/>
            <person name="Braeken M."/>
            <person name="Weltjens I."/>
            <person name="Voet M."/>
            <person name="Bastiaens I."/>
            <person name="Aert R."/>
            <person name="Defoor E."/>
            <person name="Weitzenegger T."/>
            <person name="Bothe G."/>
            <person name="Ramsperger U."/>
            <person name="Hilbert H."/>
            <person name="Braun M."/>
            <person name="Holzer E."/>
            <person name="Brandt A."/>
            <person name="Peters S."/>
            <person name="van Staveren M."/>
            <person name="Dirkse W."/>
            <person name="Mooijman P."/>
            <person name="Klein Lankhorst R."/>
            <person name="Rose M."/>
            <person name="Hauf J."/>
            <person name="Koetter P."/>
            <person name="Berneiser S."/>
            <person name="Hempel S."/>
            <person name="Feldpausch M."/>
            <person name="Lamberth S."/>
            <person name="Van den Daele H."/>
            <person name="De Keyser A."/>
            <person name="Buysshaert C."/>
            <person name="Gielen J."/>
            <person name="Villarroel R."/>
            <person name="De Clercq R."/>
            <person name="van Montagu M."/>
            <person name="Rogers J."/>
            <person name="Cronin A."/>
            <person name="Quail M.A."/>
            <person name="Bray-Allen S."/>
            <person name="Clark L."/>
            <person name="Doggett J."/>
            <person name="Hall S."/>
            <person name="Kay M."/>
            <person name="Lennard N."/>
            <person name="McLay K."/>
            <person name="Mayes R."/>
            <person name="Pettett A."/>
            <person name="Rajandream M.A."/>
            <person name="Lyne M."/>
            <person name="Benes V."/>
            <person name="Rechmann S."/>
            <person name="Borkova D."/>
            <person name="Bloecker H."/>
            <person name="Scharfe M."/>
            <person name="Grimm M."/>
            <person name="Loehnert T.-H."/>
            <person name="Dose S."/>
            <person name="de Haan M."/>
            <person name="Maarse A.C."/>
            <person name="Schaefer M."/>
            <person name="Mueller-Auer S."/>
            <person name="Gabel C."/>
            <person name="Fuchs M."/>
            <person name="Fartmann B."/>
            <person name="Granderath K."/>
            <person name="Dauner D."/>
            <person name="Herzl A."/>
            <person name="Neumann S."/>
            <person name="Argiriou A."/>
            <person name="Vitale D."/>
            <person name="Liguori R."/>
            <person name="Piravandi E."/>
            <person name="Massenet O."/>
            <person name="Quigley F."/>
            <person name="Clabauld G."/>
            <person name="Muendlein A."/>
            <person name="Felber R."/>
            <person name="Schnabl S."/>
            <person name="Hiller R."/>
            <person name="Schmidt W."/>
            <person name="Lecharny A."/>
            <person name="Aubourg S."/>
            <person name="Chefdor F."/>
            <person name="Cooke R."/>
            <person name="Berger C."/>
            <person name="Monfort A."/>
            <person name="Casacuberta E."/>
            <person name="Gibbons T."/>
            <person name="Weber N."/>
            <person name="Vandenbol M."/>
            <person name="Bargues M."/>
            <person name="Terol J."/>
            <person name="Torres A."/>
            <person name="Perez-Perez A."/>
            <person name="Purnelle B."/>
            <person name="Bent E."/>
            <person name="Johnson S."/>
            <person name="Tacon D."/>
            <person name="Jesse T."/>
            <person name="Heijnen L."/>
            <person name="Schwarz S."/>
            <person name="Scholler P."/>
            <person name="Heber S."/>
            <person name="Francs P."/>
            <person name="Bielke C."/>
            <person name="Frishman D."/>
            <person name="Haase D."/>
            <person name="Lemcke K."/>
            <person name="Mewes H.-W."/>
            <person name="Stocker S."/>
            <person name="Zaccaria P."/>
            <person name="Bevan M."/>
            <person name="Wilson R.K."/>
            <person name="de la Bastide M."/>
            <person name="Habermann K."/>
            <person name="Parnell L."/>
            <person name="Dedhia N."/>
            <person name="Gnoj L."/>
            <person name="Schutz K."/>
            <person name="Huang E."/>
            <person name="Spiegel L."/>
            <person name="Sekhon M."/>
            <person name="Murray J."/>
            <person name="Sheet P."/>
            <person name="Cordes M."/>
            <person name="Abu-Threideh J."/>
            <person name="Stoneking T."/>
            <person name="Kalicki J."/>
            <person name="Graves T."/>
            <person name="Harmon G."/>
            <person name="Edwards J."/>
            <person name="Latreille P."/>
            <person name="Courtney L."/>
            <person name="Cloud J."/>
            <person name="Abbott A."/>
            <person name="Scott K."/>
            <person name="Johnson D."/>
            <person name="Minx P."/>
            <person name="Bentley D."/>
            <person name="Fulton B."/>
            <person name="Miller N."/>
            <person name="Greco T."/>
            <person name="Kemp K."/>
            <person name="Kramer J."/>
            <person name="Fulton L."/>
            <person name="Mardis E."/>
            <person name="Dante M."/>
            <person name="Pepin K."/>
            <person name="Hillier L.W."/>
            <person name="Nelson J."/>
            <person name="Spieth J."/>
            <person name="Ryan E."/>
            <person name="Andrews S."/>
            <person name="Geisel C."/>
            <person name="Layman D."/>
            <person name="Du H."/>
            <person name="Ali J."/>
            <person name="Berghoff A."/>
            <person name="Jones K."/>
            <person name="Drone K."/>
            <person name="Cotton M."/>
            <person name="Joshu C."/>
            <person name="Antonoiu B."/>
            <person name="Zidanic M."/>
            <person name="Strong C."/>
            <person name="Sun H."/>
            <person name="Lamar B."/>
            <person name="Yordan C."/>
            <person name="Ma P."/>
            <person name="Zhong J."/>
            <person name="Preston R."/>
            <person name="Vil D."/>
            <person name="Shekher M."/>
            <person name="Matero A."/>
            <person name="Shah R."/>
            <person name="Swaby I.K."/>
            <person name="O'Shaughnessy A."/>
            <person name="Rodriguez M."/>
            <person name="Hoffman J."/>
            <person name="Till S."/>
            <person name="Granat S."/>
            <person name="Shohdy N."/>
            <person name="Hasegawa A."/>
            <person name="Hameed A."/>
            <person name="Lodhi M."/>
            <person name="Johnson A."/>
            <person name="Chen E."/>
            <person name="Marra M.A."/>
            <person name="Martienssen R."/>
            <person name="McCombie W.R."/>
        </authorList>
    </citation>
    <scope>NUCLEOTIDE SEQUENCE [LARGE SCALE GENOMIC DNA]</scope>
    <source>
        <strain>cv. Columbia</strain>
    </source>
</reference>
<reference key="2">
    <citation type="journal article" date="2017" name="Plant J.">
        <title>Araport11: a complete reannotation of the Arabidopsis thaliana reference genome.</title>
        <authorList>
            <person name="Cheng C.Y."/>
            <person name="Krishnakumar V."/>
            <person name="Chan A.P."/>
            <person name="Thibaud-Nissen F."/>
            <person name="Schobel S."/>
            <person name="Town C.D."/>
        </authorList>
    </citation>
    <scope>GENOME REANNOTATION</scope>
    <source>
        <strain>cv. Columbia</strain>
    </source>
</reference>
<reference key="3">
    <citation type="journal article" date="2003" name="Science">
        <title>Empirical analysis of transcriptional activity in the Arabidopsis genome.</title>
        <authorList>
            <person name="Yamada K."/>
            <person name="Lim J."/>
            <person name="Dale J.M."/>
            <person name="Chen H."/>
            <person name="Shinn P."/>
            <person name="Palm C.J."/>
            <person name="Southwick A.M."/>
            <person name="Wu H.C."/>
            <person name="Kim C.J."/>
            <person name="Nguyen M."/>
            <person name="Pham P.K."/>
            <person name="Cheuk R.F."/>
            <person name="Karlin-Newmann G."/>
            <person name="Liu S.X."/>
            <person name="Lam B."/>
            <person name="Sakano H."/>
            <person name="Wu T."/>
            <person name="Yu G."/>
            <person name="Miranda M."/>
            <person name="Quach H.L."/>
            <person name="Tripp M."/>
            <person name="Chang C.H."/>
            <person name="Lee J.M."/>
            <person name="Toriumi M.J."/>
            <person name="Chan M.M."/>
            <person name="Tang C.C."/>
            <person name="Onodera C.S."/>
            <person name="Deng J.M."/>
            <person name="Akiyama K."/>
            <person name="Ansari Y."/>
            <person name="Arakawa T."/>
            <person name="Banh J."/>
            <person name="Banno F."/>
            <person name="Bowser L."/>
            <person name="Brooks S.Y."/>
            <person name="Carninci P."/>
            <person name="Chao Q."/>
            <person name="Choy N."/>
            <person name="Enju A."/>
            <person name="Goldsmith A.D."/>
            <person name="Gurjal M."/>
            <person name="Hansen N.F."/>
            <person name="Hayashizaki Y."/>
            <person name="Johnson-Hopson C."/>
            <person name="Hsuan V.W."/>
            <person name="Iida K."/>
            <person name="Karnes M."/>
            <person name="Khan S."/>
            <person name="Koesema E."/>
            <person name="Ishida J."/>
            <person name="Jiang P.X."/>
            <person name="Jones T."/>
            <person name="Kawai J."/>
            <person name="Kamiya A."/>
            <person name="Meyers C."/>
            <person name="Nakajima M."/>
            <person name="Narusaka M."/>
            <person name="Seki M."/>
            <person name="Sakurai T."/>
            <person name="Satou M."/>
            <person name="Tamse R."/>
            <person name="Vaysberg M."/>
            <person name="Wallender E.K."/>
            <person name="Wong C."/>
            <person name="Yamamura Y."/>
            <person name="Yuan S."/>
            <person name="Shinozaki K."/>
            <person name="Davis R.W."/>
            <person name="Theologis A."/>
            <person name="Ecker J.R."/>
        </authorList>
    </citation>
    <scope>NUCLEOTIDE SEQUENCE [LARGE SCALE MRNA] (ISOFORM 2)</scope>
    <source>
        <strain>cv. Columbia</strain>
    </source>
</reference>
<reference key="4">
    <citation type="submission" date="2004-09" db="EMBL/GenBank/DDBJ databases">
        <title>Large-scale analysis of RIKEN Arabidopsis full-length (RAFL) cDNAs.</title>
        <authorList>
            <person name="Totoki Y."/>
            <person name="Seki M."/>
            <person name="Ishida J."/>
            <person name="Nakajima M."/>
            <person name="Enju A."/>
            <person name="Kamiya A."/>
            <person name="Narusaka M."/>
            <person name="Shin-i T."/>
            <person name="Nakagawa M."/>
            <person name="Sakamoto N."/>
            <person name="Oishi K."/>
            <person name="Kohara Y."/>
            <person name="Kobayashi M."/>
            <person name="Toyoda A."/>
            <person name="Sakaki Y."/>
            <person name="Sakurai T."/>
            <person name="Iida K."/>
            <person name="Akiyama K."/>
            <person name="Satou M."/>
            <person name="Toyoda T."/>
            <person name="Konagaya A."/>
            <person name="Carninci P."/>
            <person name="Kawai J."/>
            <person name="Hayashizaki Y."/>
            <person name="Shinozaki K."/>
        </authorList>
    </citation>
    <scope>NUCLEOTIDE SEQUENCE [LARGE SCALE MRNA] (ISOFORM 1)</scope>
    <source>
        <strain>cv. Columbia</strain>
    </source>
</reference>